<organism>
    <name type="scientific">Streptococcus pneumoniae (strain P1031)</name>
    <dbReference type="NCBI Taxonomy" id="488223"/>
    <lineage>
        <taxon>Bacteria</taxon>
        <taxon>Bacillati</taxon>
        <taxon>Bacillota</taxon>
        <taxon>Bacilli</taxon>
        <taxon>Lactobacillales</taxon>
        <taxon>Streptococcaceae</taxon>
        <taxon>Streptococcus</taxon>
    </lineage>
</organism>
<name>THII_STRZP</name>
<protein>
    <recommendedName>
        <fullName evidence="1">Probable tRNA sulfurtransferase</fullName>
        <ecNumber evidence="1">2.8.1.4</ecNumber>
    </recommendedName>
    <alternativeName>
        <fullName evidence="1">Sulfur carrier protein ThiS sulfurtransferase</fullName>
    </alternativeName>
    <alternativeName>
        <fullName evidence="1">Thiamine biosynthesis protein ThiI</fullName>
    </alternativeName>
    <alternativeName>
        <fullName evidence="1">tRNA 4-thiouridine synthase</fullName>
    </alternativeName>
</protein>
<accession>C1CJW9</accession>
<gene>
    <name evidence="1" type="primary">thiI</name>
    <name type="ordered locus">SPP_0889</name>
</gene>
<evidence type="ECO:0000255" key="1">
    <source>
        <dbReference type="HAMAP-Rule" id="MF_00021"/>
    </source>
</evidence>
<sequence length="404" mass="45058">MQYSEIMIRYGELSTKGKNRMRFINKLRNNISDVLSIYPQVKVTADRDRAHAYLNGADYTAVAESLKQVFGIQNFSPVYKVEKSVEVLKSAVQEIMQDIYKEGMTFKISSKRSDHTFELDSRELNQTLGGAVFEAIPNVQAQMKSPDINLQVEIREEAAYLSYETVRGAGGLPVGTSGKGMLMLSGGIDSPVAGYLALKRGVDIEAVHFASPPYTSPGALKKAQDLTRKLTKFGGNIQFIEVPFTEIQEEIKAKAPEAYLMTLTRRFMMRITDRIREVRNGLVIINGESLGQVASQTLESMKAINAVTNTPIIRPVVTMDKLEIIDIAQEIDTFDISIQPFEDCCTIFAPDRPKTNPKIKNAEQYEARMDVEGLVERAVAGIMITEITPQAEKDEVDDLIDNLL</sequence>
<comment type="function">
    <text evidence="1">Catalyzes the ATP-dependent transfer of a sulfur to tRNA to produce 4-thiouridine in position 8 of tRNAs, which functions as a near-UV photosensor. Also catalyzes the transfer of sulfur to the sulfur carrier protein ThiS, forming ThiS-thiocarboxylate. This is a step in the synthesis of thiazole, in the thiamine biosynthesis pathway. The sulfur is donated as persulfide by IscS.</text>
</comment>
<comment type="catalytic activity">
    <reaction evidence="1">
        <text>[ThiI sulfur-carrier protein]-S-sulfanyl-L-cysteine + a uridine in tRNA + 2 reduced [2Fe-2S]-[ferredoxin] + ATP + H(+) = [ThiI sulfur-carrier protein]-L-cysteine + a 4-thiouridine in tRNA + 2 oxidized [2Fe-2S]-[ferredoxin] + AMP + diphosphate</text>
        <dbReference type="Rhea" id="RHEA:24176"/>
        <dbReference type="Rhea" id="RHEA-COMP:10000"/>
        <dbReference type="Rhea" id="RHEA-COMP:10001"/>
        <dbReference type="Rhea" id="RHEA-COMP:13337"/>
        <dbReference type="Rhea" id="RHEA-COMP:13338"/>
        <dbReference type="Rhea" id="RHEA-COMP:13339"/>
        <dbReference type="Rhea" id="RHEA-COMP:13340"/>
        <dbReference type="ChEBI" id="CHEBI:15378"/>
        <dbReference type="ChEBI" id="CHEBI:29950"/>
        <dbReference type="ChEBI" id="CHEBI:30616"/>
        <dbReference type="ChEBI" id="CHEBI:33019"/>
        <dbReference type="ChEBI" id="CHEBI:33737"/>
        <dbReference type="ChEBI" id="CHEBI:33738"/>
        <dbReference type="ChEBI" id="CHEBI:61963"/>
        <dbReference type="ChEBI" id="CHEBI:65315"/>
        <dbReference type="ChEBI" id="CHEBI:136798"/>
        <dbReference type="ChEBI" id="CHEBI:456215"/>
        <dbReference type="EC" id="2.8.1.4"/>
    </reaction>
</comment>
<comment type="catalytic activity">
    <reaction evidence="1">
        <text>[ThiS sulfur-carrier protein]-C-terminal Gly-Gly-AMP + S-sulfanyl-L-cysteinyl-[cysteine desulfurase] + AH2 = [ThiS sulfur-carrier protein]-C-terminal-Gly-aminoethanethioate + L-cysteinyl-[cysteine desulfurase] + A + AMP + 2 H(+)</text>
        <dbReference type="Rhea" id="RHEA:43340"/>
        <dbReference type="Rhea" id="RHEA-COMP:12157"/>
        <dbReference type="Rhea" id="RHEA-COMP:12158"/>
        <dbReference type="Rhea" id="RHEA-COMP:12910"/>
        <dbReference type="Rhea" id="RHEA-COMP:19908"/>
        <dbReference type="ChEBI" id="CHEBI:13193"/>
        <dbReference type="ChEBI" id="CHEBI:15378"/>
        <dbReference type="ChEBI" id="CHEBI:17499"/>
        <dbReference type="ChEBI" id="CHEBI:29950"/>
        <dbReference type="ChEBI" id="CHEBI:61963"/>
        <dbReference type="ChEBI" id="CHEBI:90618"/>
        <dbReference type="ChEBI" id="CHEBI:232372"/>
        <dbReference type="ChEBI" id="CHEBI:456215"/>
    </reaction>
</comment>
<comment type="pathway">
    <text evidence="1">Cofactor biosynthesis; thiamine diphosphate biosynthesis.</text>
</comment>
<comment type="subcellular location">
    <subcellularLocation>
        <location evidence="1">Cytoplasm</location>
    </subcellularLocation>
</comment>
<comment type="similarity">
    <text evidence="1">Belongs to the ThiI family.</text>
</comment>
<feature type="chain" id="PRO_1000196936" description="Probable tRNA sulfurtransferase">
    <location>
        <begin position="1"/>
        <end position="404"/>
    </location>
</feature>
<feature type="domain" description="THUMP" evidence="1">
    <location>
        <begin position="60"/>
        <end position="165"/>
    </location>
</feature>
<feature type="binding site" evidence="1">
    <location>
        <begin position="183"/>
        <end position="184"/>
    </location>
    <ligand>
        <name>ATP</name>
        <dbReference type="ChEBI" id="CHEBI:30616"/>
    </ligand>
</feature>
<feature type="binding site" evidence="1">
    <location>
        <begin position="208"/>
        <end position="209"/>
    </location>
    <ligand>
        <name>ATP</name>
        <dbReference type="ChEBI" id="CHEBI:30616"/>
    </ligand>
</feature>
<feature type="binding site" evidence="1">
    <location>
        <position position="265"/>
    </location>
    <ligand>
        <name>ATP</name>
        <dbReference type="ChEBI" id="CHEBI:30616"/>
    </ligand>
</feature>
<feature type="binding site" evidence="1">
    <location>
        <position position="287"/>
    </location>
    <ligand>
        <name>ATP</name>
        <dbReference type="ChEBI" id="CHEBI:30616"/>
    </ligand>
</feature>
<feature type="binding site" evidence="1">
    <location>
        <position position="296"/>
    </location>
    <ligand>
        <name>ATP</name>
        <dbReference type="ChEBI" id="CHEBI:30616"/>
    </ligand>
</feature>
<reference key="1">
    <citation type="journal article" date="2010" name="Genome Biol.">
        <title>Structure and dynamics of the pan-genome of Streptococcus pneumoniae and closely related species.</title>
        <authorList>
            <person name="Donati C."/>
            <person name="Hiller N.L."/>
            <person name="Tettelin H."/>
            <person name="Muzzi A."/>
            <person name="Croucher N.J."/>
            <person name="Angiuoli S.V."/>
            <person name="Oggioni M."/>
            <person name="Dunning Hotopp J.C."/>
            <person name="Hu F.Z."/>
            <person name="Riley D.R."/>
            <person name="Covacci A."/>
            <person name="Mitchell T.J."/>
            <person name="Bentley S.D."/>
            <person name="Kilian M."/>
            <person name="Ehrlich G.D."/>
            <person name="Rappuoli R."/>
            <person name="Moxon E.R."/>
            <person name="Masignani V."/>
        </authorList>
    </citation>
    <scope>NUCLEOTIDE SEQUENCE [LARGE SCALE GENOMIC DNA]</scope>
    <source>
        <strain>P1031</strain>
    </source>
</reference>
<proteinExistence type="inferred from homology"/>
<dbReference type="EC" id="2.8.1.4" evidence="1"/>
<dbReference type="EMBL" id="CP000920">
    <property type="protein sequence ID" value="ACO20940.1"/>
    <property type="molecule type" value="Genomic_DNA"/>
</dbReference>
<dbReference type="RefSeq" id="WP_001200062.1">
    <property type="nucleotide sequence ID" value="NC_012467.1"/>
</dbReference>
<dbReference type="SMR" id="C1CJW9"/>
<dbReference type="KEGG" id="spp:SPP_0889"/>
<dbReference type="HOGENOM" id="CLU_037952_4_0_9"/>
<dbReference type="UniPathway" id="UPA00060"/>
<dbReference type="GO" id="GO:0005829">
    <property type="term" value="C:cytosol"/>
    <property type="evidence" value="ECO:0007669"/>
    <property type="project" value="TreeGrafter"/>
</dbReference>
<dbReference type="GO" id="GO:0005524">
    <property type="term" value="F:ATP binding"/>
    <property type="evidence" value="ECO:0007669"/>
    <property type="project" value="UniProtKB-UniRule"/>
</dbReference>
<dbReference type="GO" id="GO:0004810">
    <property type="term" value="F:CCA tRNA nucleotidyltransferase activity"/>
    <property type="evidence" value="ECO:0007669"/>
    <property type="project" value="InterPro"/>
</dbReference>
<dbReference type="GO" id="GO:0000049">
    <property type="term" value="F:tRNA binding"/>
    <property type="evidence" value="ECO:0007669"/>
    <property type="project" value="UniProtKB-UniRule"/>
</dbReference>
<dbReference type="GO" id="GO:0140741">
    <property type="term" value="F:tRNA-uracil-4 sulfurtransferase activity"/>
    <property type="evidence" value="ECO:0007669"/>
    <property type="project" value="UniProtKB-EC"/>
</dbReference>
<dbReference type="GO" id="GO:0009228">
    <property type="term" value="P:thiamine biosynthetic process"/>
    <property type="evidence" value="ECO:0007669"/>
    <property type="project" value="UniProtKB-KW"/>
</dbReference>
<dbReference type="GO" id="GO:0009229">
    <property type="term" value="P:thiamine diphosphate biosynthetic process"/>
    <property type="evidence" value="ECO:0007669"/>
    <property type="project" value="UniProtKB-UniRule"/>
</dbReference>
<dbReference type="GO" id="GO:0052837">
    <property type="term" value="P:thiazole biosynthetic process"/>
    <property type="evidence" value="ECO:0007669"/>
    <property type="project" value="TreeGrafter"/>
</dbReference>
<dbReference type="GO" id="GO:0002937">
    <property type="term" value="P:tRNA 4-thiouridine biosynthesis"/>
    <property type="evidence" value="ECO:0007669"/>
    <property type="project" value="TreeGrafter"/>
</dbReference>
<dbReference type="CDD" id="cd01712">
    <property type="entry name" value="PPase_ThiI"/>
    <property type="match status" value="1"/>
</dbReference>
<dbReference type="CDD" id="cd11716">
    <property type="entry name" value="THUMP_ThiI"/>
    <property type="match status" value="1"/>
</dbReference>
<dbReference type="FunFam" id="3.30.2130.30:FF:000006">
    <property type="entry name" value="Probable tRNA sulfurtransferase"/>
    <property type="match status" value="1"/>
</dbReference>
<dbReference type="FunFam" id="3.40.50.620:FF:000053">
    <property type="entry name" value="Probable tRNA sulfurtransferase"/>
    <property type="match status" value="1"/>
</dbReference>
<dbReference type="Gene3D" id="3.30.2130.30">
    <property type="match status" value="1"/>
</dbReference>
<dbReference type="Gene3D" id="3.40.50.620">
    <property type="entry name" value="HUPs"/>
    <property type="match status" value="1"/>
</dbReference>
<dbReference type="HAMAP" id="MF_00021">
    <property type="entry name" value="ThiI"/>
    <property type="match status" value="1"/>
</dbReference>
<dbReference type="InterPro" id="IPR014729">
    <property type="entry name" value="Rossmann-like_a/b/a_fold"/>
</dbReference>
<dbReference type="InterPro" id="IPR020536">
    <property type="entry name" value="ThiI_AANH"/>
</dbReference>
<dbReference type="InterPro" id="IPR054173">
    <property type="entry name" value="ThiI_fer"/>
</dbReference>
<dbReference type="InterPro" id="IPR049961">
    <property type="entry name" value="ThiI_N"/>
</dbReference>
<dbReference type="InterPro" id="IPR004114">
    <property type="entry name" value="THUMP_dom"/>
</dbReference>
<dbReference type="InterPro" id="IPR049962">
    <property type="entry name" value="THUMP_ThiI"/>
</dbReference>
<dbReference type="InterPro" id="IPR003720">
    <property type="entry name" value="tRNA_STrfase"/>
</dbReference>
<dbReference type="InterPro" id="IPR050102">
    <property type="entry name" value="tRNA_sulfurtransferase_ThiI"/>
</dbReference>
<dbReference type="NCBIfam" id="TIGR00342">
    <property type="entry name" value="tRNA uracil 4-sulfurtransferase ThiI"/>
    <property type="match status" value="1"/>
</dbReference>
<dbReference type="PANTHER" id="PTHR43209">
    <property type="entry name" value="TRNA SULFURTRANSFERASE"/>
    <property type="match status" value="1"/>
</dbReference>
<dbReference type="PANTHER" id="PTHR43209:SF1">
    <property type="entry name" value="TRNA SULFURTRANSFERASE"/>
    <property type="match status" value="1"/>
</dbReference>
<dbReference type="Pfam" id="PF02568">
    <property type="entry name" value="ThiI"/>
    <property type="match status" value="1"/>
</dbReference>
<dbReference type="Pfam" id="PF22025">
    <property type="entry name" value="ThiI_fer"/>
    <property type="match status" value="1"/>
</dbReference>
<dbReference type="Pfam" id="PF02926">
    <property type="entry name" value="THUMP"/>
    <property type="match status" value="1"/>
</dbReference>
<dbReference type="SMART" id="SM00981">
    <property type="entry name" value="THUMP"/>
    <property type="match status" value="1"/>
</dbReference>
<dbReference type="SUPFAM" id="SSF52402">
    <property type="entry name" value="Adenine nucleotide alpha hydrolases-like"/>
    <property type="match status" value="1"/>
</dbReference>
<dbReference type="SUPFAM" id="SSF143437">
    <property type="entry name" value="THUMP domain-like"/>
    <property type="match status" value="1"/>
</dbReference>
<dbReference type="PROSITE" id="PS51165">
    <property type="entry name" value="THUMP"/>
    <property type="match status" value="1"/>
</dbReference>
<keyword id="KW-0067">ATP-binding</keyword>
<keyword id="KW-0963">Cytoplasm</keyword>
<keyword id="KW-0547">Nucleotide-binding</keyword>
<keyword id="KW-0694">RNA-binding</keyword>
<keyword id="KW-0784">Thiamine biosynthesis</keyword>
<keyword id="KW-0808">Transferase</keyword>
<keyword id="KW-0820">tRNA-binding</keyword>